<feature type="chain" id="PRO_0000235842" description="Stromal membrane-associated protein 2">
    <location>
        <begin position="1"/>
        <end position="428"/>
    </location>
</feature>
<feature type="domain" description="Arf-GAP" evidence="2">
    <location>
        <begin position="13"/>
        <end position="139"/>
    </location>
</feature>
<feature type="zinc finger region" description="C4-type" evidence="2">
    <location>
        <begin position="28"/>
        <end position="51"/>
    </location>
</feature>
<feature type="region of interest" description="Interaction with clathrin heavy chains">
    <location>
        <begin position="163"/>
        <end position="231"/>
    </location>
</feature>
<feature type="region of interest" description="Disordered" evidence="3">
    <location>
        <begin position="218"/>
        <end position="262"/>
    </location>
</feature>
<feature type="region of interest" description="Interaction with PICALM" evidence="4">
    <location>
        <begin position="339"/>
        <end position="428"/>
    </location>
</feature>
<feature type="compositionally biased region" description="Basic and acidic residues" evidence="3">
    <location>
        <begin position="252"/>
        <end position="262"/>
    </location>
</feature>
<feature type="modified residue" description="Phosphoserine" evidence="1">
    <location>
        <position position="127"/>
    </location>
</feature>
<feature type="modified residue" description="Phosphoserine" evidence="8">
    <location>
        <position position="219"/>
    </location>
</feature>
<feature type="modified residue" description="Phosphoserine" evidence="1">
    <location>
        <position position="224"/>
    </location>
</feature>
<feature type="modified residue" description="Phosphoserine" evidence="1">
    <location>
        <position position="230"/>
    </location>
</feature>
<feature type="modified residue" description="Phosphoserine" evidence="7 8">
    <location>
        <position position="239"/>
    </location>
</feature>
<feature type="splice variant" id="VSP_018505" description="In isoform 2." evidence="5">
    <original>AVGSMPTAGSAGSVPENLN</original>
    <variation>SQGANQKKQARNSSPRTPS</variation>
    <location>
        <begin position="227"/>
        <end position="245"/>
    </location>
</feature>
<feature type="splice variant" id="VSP_018506" description="In isoform 2." evidence="5">
    <location>
        <begin position="246"/>
        <end position="428"/>
    </location>
</feature>
<feature type="mutagenesis site" description="Loss of GTPase activation." evidence="4">
    <original>R</original>
    <variation>Q</variation>
    <location>
        <position position="56"/>
    </location>
</feature>
<feature type="mutagenesis site" description="Loss of interaction with clathrin heavy chains; when associated with 212-AAA-214." evidence="4">
    <original>LLGLD</original>
    <variation>AAAAA</variation>
    <location>
        <begin position="187"/>
        <end position="191"/>
    </location>
</feature>
<feature type="mutagenesis site" description="Loss of interaction with clathrin heavy chains; when associated with 187-AAAAA-191." evidence="4">
    <original>DLL</original>
    <variation>AAA</variation>
    <location>
        <begin position="212"/>
        <end position="214"/>
    </location>
</feature>
<feature type="sequence conflict" description="In Ref. 2; AAH52413." evidence="6" ref="2">
    <original>A</original>
    <variation>V</variation>
    <location>
        <position position="89"/>
    </location>
</feature>
<feature type="sequence conflict" description="In Ref. 2; AAH52413." evidence="6" ref="2">
    <original>K</original>
    <variation>E</variation>
    <location>
        <position position="179"/>
    </location>
</feature>
<name>SMAP2_MOUSE</name>
<sequence>MTGKSVKDVDRYQAVLANLLLEEDNKFCADCQSKGPRWASWNIGVFICIRCAGIHRNLGVHISRVKSVNLDQWTQEQIQCMQEMGNGKANRLYEAYLPETFRRPQIDPAVEGFIRDKYEKKKYMDRSLDINVLRKEKDDKWKRGNEPAPEKKMEPVVFEKVKMPQKKEDAQLPRKSSPKSAAPVMDLLGLDAPVACSIANSKTSNALEKDLDLLASVPSPSSVSRKAVGSMPTAGSAGSVPENLNLFPEPGSKSEETGKKQLSKDSILSLYGSQTPQMPAQAMFMAPAQMAYPTAYPSFPGVTPPNSIMGGMVPPPVGMVAQPGASGMLTPMAMPAGYMGGMQASMMGVPNGMMTTQQAGYMASMAAMPQTVYGVQPAQQLQWNLTQMTQQMAGMNFYGANGMMNYGQSMGGGNGQAANQTLSPQMWK</sequence>
<evidence type="ECO:0000250" key="1">
    <source>
        <dbReference type="UniProtKB" id="Q8WU79"/>
    </source>
</evidence>
<evidence type="ECO:0000255" key="2">
    <source>
        <dbReference type="PROSITE-ProRule" id="PRU00288"/>
    </source>
</evidence>
<evidence type="ECO:0000256" key="3">
    <source>
        <dbReference type="SAM" id="MobiDB-lite"/>
    </source>
</evidence>
<evidence type="ECO:0000269" key="4">
    <source>
    </source>
</evidence>
<evidence type="ECO:0000303" key="5">
    <source>
    </source>
</evidence>
<evidence type="ECO:0000305" key="6"/>
<evidence type="ECO:0007744" key="7">
    <source>
    </source>
</evidence>
<evidence type="ECO:0007744" key="8">
    <source>
    </source>
</evidence>
<organism>
    <name type="scientific">Mus musculus</name>
    <name type="common">Mouse</name>
    <dbReference type="NCBI Taxonomy" id="10090"/>
    <lineage>
        <taxon>Eukaryota</taxon>
        <taxon>Metazoa</taxon>
        <taxon>Chordata</taxon>
        <taxon>Craniata</taxon>
        <taxon>Vertebrata</taxon>
        <taxon>Euteleostomi</taxon>
        <taxon>Mammalia</taxon>
        <taxon>Eutheria</taxon>
        <taxon>Euarchontoglires</taxon>
        <taxon>Glires</taxon>
        <taxon>Rodentia</taxon>
        <taxon>Myomorpha</taxon>
        <taxon>Muroidea</taxon>
        <taxon>Muridae</taxon>
        <taxon>Murinae</taxon>
        <taxon>Mus</taxon>
        <taxon>Mus</taxon>
    </lineage>
</organism>
<gene>
    <name type="primary">Smap2</name>
    <name type="synonym">Smap1l</name>
</gene>
<keyword id="KW-0025">Alternative splicing</keyword>
<keyword id="KW-0963">Cytoplasm</keyword>
<keyword id="KW-0343">GTPase activation</keyword>
<keyword id="KW-0479">Metal-binding</keyword>
<keyword id="KW-0597">Phosphoprotein</keyword>
<keyword id="KW-1185">Reference proteome</keyword>
<keyword id="KW-0862">Zinc</keyword>
<keyword id="KW-0863">Zinc-finger</keyword>
<dbReference type="EMBL" id="AK152757">
    <property type="protein sequence ID" value="BAE31472.1"/>
    <property type="molecule type" value="mRNA"/>
</dbReference>
<dbReference type="EMBL" id="BC052413">
    <property type="protein sequence ID" value="AAH52413.1"/>
    <property type="molecule type" value="mRNA"/>
</dbReference>
<dbReference type="CCDS" id="CCDS18598.1">
    <molecule id="Q7TN29-1"/>
</dbReference>
<dbReference type="RefSeq" id="NP_598477.2">
    <molecule id="Q7TN29-1"/>
    <property type="nucleotide sequence ID" value="NM_133716.3"/>
</dbReference>
<dbReference type="SMR" id="Q7TN29"/>
<dbReference type="BioGRID" id="213674">
    <property type="interactions" value="3"/>
</dbReference>
<dbReference type="FunCoup" id="Q7TN29">
    <property type="interactions" value="2928"/>
</dbReference>
<dbReference type="IntAct" id="Q7TN29">
    <property type="interactions" value="1"/>
</dbReference>
<dbReference type="MINT" id="Q7TN29"/>
<dbReference type="STRING" id="10090.ENSMUSP00000035800"/>
<dbReference type="GlyGen" id="Q7TN29">
    <property type="glycosylation" value="2 sites, 1 O-linked glycan (2 sites)"/>
</dbReference>
<dbReference type="iPTMnet" id="Q7TN29"/>
<dbReference type="PhosphoSitePlus" id="Q7TN29"/>
<dbReference type="SwissPalm" id="Q7TN29"/>
<dbReference type="jPOST" id="Q7TN29"/>
<dbReference type="PaxDb" id="10090-ENSMUSP00000035800"/>
<dbReference type="PeptideAtlas" id="Q7TN29"/>
<dbReference type="ProteomicsDB" id="257259">
    <molecule id="Q7TN29-1"/>
</dbReference>
<dbReference type="ProteomicsDB" id="257260">
    <molecule id="Q7TN29-2"/>
</dbReference>
<dbReference type="Pumba" id="Q7TN29"/>
<dbReference type="Antibodypedia" id="17974">
    <property type="antibodies" value="137 antibodies from 23 providers"/>
</dbReference>
<dbReference type="DNASU" id="69780"/>
<dbReference type="Ensembl" id="ENSMUST00000043200.8">
    <molecule id="Q7TN29-1"/>
    <property type="protein sequence ID" value="ENSMUSP00000035800.8"/>
    <property type="gene ID" value="ENSMUSG00000032870.9"/>
</dbReference>
<dbReference type="GeneID" id="69780"/>
<dbReference type="KEGG" id="mmu:69780"/>
<dbReference type="UCSC" id="uc008unw.2">
    <molecule id="Q7TN29-1"/>
    <property type="organism name" value="mouse"/>
</dbReference>
<dbReference type="AGR" id="MGI:1917030"/>
<dbReference type="CTD" id="64744"/>
<dbReference type="MGI" id="MGI:1917030">
    <property type="gene designation" value="Smap2"/>
</dbReference>
<dbReference type="VEuPathDB" id="HostDB:ENSMUSG00000032870"/>
<dbReference type="eggNOG" id="KOG0703">
    <property type="taxonomic scope" value="Eukaryota"/>
</dbReference>
<dbReference type="GeneTree" id="ENSGT00940000158387"/>
<dbReference type="HOGENOM" id="CLU_023062_5_0_1"/>
<dbReference type="InParanoid" id="Q7TN29"/>
<dbReference type="OMA" id="MMGYGQS"/>
<dbReference type="OrthoDB" id="10266696at2759"/>
<dbReference type="PhylomeDB" id="Q7TN29"/>
<dbReference type="TreeFam" id="TF313876"/>
<dbReference type="BioGRID-ORCS" id="69780">
    <property type="hits" value="0 hits in 77 CRISPR screens"/>
</dbReference>
<dbReference type="ChiTaRS" id="Smap2">
    <property type="organism name" value="mouse"/>
</dbReference>
<dbReference type="PRO" id="PR:Q7TN29"/>
<dbReference type="Proteomes" id="UP000000589">
    <property type="component" value="Chromosome 4"/>
</dbReference>
<dbReference type="RNAct" id="Q7TN29">
    <property type="molecule type" value="protein"/>
</dbReference>
<dbReference type="Bgee" id="ENSMUSG00000032870">
    <property type="expression patterns" value="Expressed in saccule of membranous labyrinth and 249 other cell types or tissues"/>
</dbReference>
<dbReference type="GO" id="GO:0005829">
    <property type="term" value="C:cytosol"/>
    <property type="evidence" value="ECO:0007669"/>
    <property type="project" value="Ensembl"/>
</dbReference>
<dbReference type="GO" id="GO:0005654">
    <property type="term" value="C:nucleoplasm"/>
    <property type="evidence" value="ECO:0007669"/>
    <property type="project" value="Ensembl"/>
</dbReference>
<dbReference type="GO" id="GO:0005096">
    <property type="term" value="F:GTPase activator activity"/>
    <property type="evidence" value="ECO:0007669"/>
    <property type="project" value="UniProtKB-KW"/>
</dbReference>
<dbReference type="GO" id="GO:0008270">
    <property type="term" value="F:zinc ion binding"/>
    <property type="evidence" value="ECO:0007669"/>
    <property type="project" value="UniProtKB-KW"/>
</dbReference>
<dbReference type="CDD" id="cd08859">
    <property type="entry name" value="ArfGap_SMAP2"/>
    <property type="match status" value="1"/>
</dbReference>
<dbReference type="FunFam" id="1.10.220.150:FF:000009">
    <property type="entry name" value="stromal membrane-associated protein 1 isoform X1"/>
    <property type="match status" value="1"/>
</dbReference>
<dbReference type="Gene3D" id="1.10.220.150">
    <property type="entry name" value="Arf GTPase activating protein"/>
    <property type="match status" value="1"/>
</dbReference>
<dbReference type="InterPro" id="IPR051718">
    <property type="entry name" value="ARF_GTPase-activating"/>
</dbReference>
<dbReference type="InterPro" id="IPR037278">
    <property type="entry name" value="ARFGAP/RecO"/>
</dbReference>
<dbReference type="InterPro" id="IPR001164">
    <property type="entry name" value="ArfGAP_dom"/>
</dbReference>
<dbReference type="InterPro" id="IPR038508">
    <property type="entry name" value="ArfGAP_dom_sf"/>
</dbReference>
<dbReference type="PANTHER" id="PTHR45705">
    <property type="entry name" value="FI20236P1"/>
    <property type="match status" value="1"/>
</dbReference>
<dbReference type="PANTHER" id="PTHR45705:SF4">
    <property type="entry name" value="STROMAL MEMBRANE-ASSOCIATED PROTEIN 2"/>
    <property type="match status" value="1"/>
</dbReference>
<dbReference type="Pfam" id="PF01412">
    <property type="entry name" value="ArfGap"/>
    <property type="match status" value="1"/>
</dbReference>
<dbReference type="PRINTS" id="PR00405">
    <property type="entry name" value="REVINTRACTNG"/>
</dbReference>
<dbReference type="SMART" id="SM00105">
    <property type="entry name" value="ArfGap"/>
    <property type="match status" value="1"/>
</dbReference>
<dbReference type="SUPFAM" id="SSF57863">
    <property type="entry name" value="ArfGap/RecO-like zinc finger"/>
    <property type="match status" value="1"/>
</dbReference>
<dbReference type="PROSITE" id="PS50115">
    <property type="entry name" value="ARFGAP"/>
    <property type="match status" value="1"/>
</dbReference>
<accession>Q7TN29</accession>
<accession>Q3U798</accession>
<protein>
    <recommendedName>
        <fullName>Stromal membrane-associated protein 2</fullName>
    </recommendedName>
    <alternativeName>
        <fullName>Stromal membrane-associated protein 1-like</fullName>
    </alternativeName>
</protein>
<proteinExistence type="evidence at protein level"/>
<reference key="1">
    <citation type="journal article" date="2005" name="Science">
        <title>The transcriptional landscape of the mammalian genome.</title>
        <authorList>
            <person name="Carninci P."/>
            <person name="Kasukawa T."/>
            <person name="Katayama S."/>
            <person name="Gough J."/>
            <person name="Frith M.C."/>
            <person name="Maeda N."/>
            <person name="Oyama R."/>
            <person name="Ravasi T."/>
            <person name="Lenhard B."/>
            <person name="Wells C."/>
            <person name="Kodzius R."/>
            <person name="Shimokawa K."/>
            <person name="Bajic V.B."/>
            <person name="Brenner S.E."/>
            <person name="Batalov S."/>
            <person name="Forrest A.R."/>
            <person name="Zavolan M."/>
            <person name="Davis M.J."/>
            <person name="Wilming L.G."/>
            <person name="Aidinis V."/>
            <person name="Allen J.E."/>
            <person name="Ambesi-Impiombato A."/>
            <person name="Apweiler R."/>
            <person name="Aturaliya R.N."/>
            <person name="Bailey T.L."/>
            <person name="Bansal M."/>
            <person name="Baxter L."/>
            <person name="Beisel K.W."/>
            <person name="Bersano T."/>
            <person name="Bono H."/>
            <person name="Chalk A.M."/>
            <person name="Chiu K.P."/>
            <person name="Choudhary V."/>
            <person name="Christoffels A."/>
            <person name="Clutterbuck D.R."/>
            <person name="Crowe M.L."/>
            <person name="Dalla E."/>
            <person name="Dalrymple B.P."/>
            <person name="de Bono B."/>
            <person name="Della Gatta G."/>
            <person name="di Bernardo D."/>
            <person name="Down T."/>
            <person name="Engstrom P."/>
            <person name="Fagiolini M."/>
            <person name="Faulkner G."/>
            <person name="Fletcher C.F."/>
            <person name="Fukushima T."/>
            <person name="Furuno M."/>
            <person name="Futaki S."/>
            <person name="Gariboldi M."/>
            <person name="Georgii-Hemming P."/>
            <person name="Gingeras T.R."/>
            <person name="Gojobori T."/>
            <person name="Green R.E."/>
            <person name="Gustincich S."/>
            <person name="Harbers M."/>
            <person name="Hayashi Y."/>
            <person name="Hensch T.K."/>
            <person name="Hirokawa N."/>
            <person name="Hill D."/>
            <person name="Huminiecki L."/>
            <person name="Iacono M."/>
            <person name="Ikeo K."/>
            <person name="Iwama A."/>
            <person name="Ishikawa T."/>
            <person name="Jakt M."/>
            <person name="Kanapin A."/>
            <person name="Katoh M."/>
            <person name="Kawasawa Y."/>
            <person name="Kelso J."/>
            <person name="Kitamura H."/>
            <person name="Kitano H."/>
            <person name="Kollias G."/>
            <person name="Krishnan S.P."/>
            <person name="Kruger A."/>
            <person name="Kummerfeld S.K."/>
            <person name="Kurochkin I.V."/>
            <person name="Lareau L.F."/>
            <person name="Lazarevic D."/>
            <person name="Lipovich L."/>
            <person name="Liu J."/>
            <person name="Liuni S."/>
            <person name="McWilliam S."/>
            <person name="Madan Babu M."/>
            <person name="Madera M."/>
            <person name="Marchionni L."/>
            <person name="Matsuda H."/>
            <person name="Matsuzawa S."/>
            <person name="Miki H."/>
            <person name="Mignone F."/>
            <person name="Miyake S."/>
            <person name="Morris K."/>
            <person name="Mottagui-Tabar S."/>
            <person name="Mulder N."/>
            <person name="Nakano N."/>
            <person name="Nakauchi H."/>
            <person name="Ng P."/>
            <person name="Nilsson R."/>
            <person name="Nishiguchi S."/>
            <person name="Nishikawa S."/>
            <person name="Nori F."/>
            <person name="Ohara O."/>
            <person name="Okazaki Y."/>
            <person name="Orlando V."/>
            <person name="Pang K.C."/>
            <person name="Pavan W.J."/>
            <person name="Pavesi G."/>
            <person name="Pesole G."/>
            <person name="Petrovsky N."/>
            <person name="Piazza S."/>
            <person name="Reed J."/>
            <person name="Reid J.F."/>
            <person name="Ring B.Z."/>
            <person name="Ringwald M."/>
            <person name="Rost B."/>
            <person name="Ruan Y."/>
            <person name="Salzberg S.L."/>
            <person name="Sandelin A."/>
            <person name="Schneider C."/>
            <person name="Schoenbach C."/>
            <person name="Sekiguchi K."/>
            <person name="Semple C.A."/>
            <person name="Seno S."/>
            <person name="Sessa L."/>
            <person name="Sheng Y."/>
            <person name="Shibata Y."/>
            <person name="Shimada H."/>
            <person name="Shimada K."/>
            <person name="Silva D."/>
            <person name="Sinclair B."/>
            <person name="Sperling S."/>
            <person name="Stupka E."/>
            <person name="Sugiura K."/>
            <person name="Sultana R."/>
            <person name="Takenaka Y."/>
            <person name="Taki K."/>
            <person name="Tammoja K."/>
            <person name="Tan S.L."/>
            <person name="Tang S."/>
            <person name="Taylor M.S."/>
            <person name="Tegner J."/>
            <person name="Teichmann S.A."/>
            <person name="Ueda H.R."/>
            <person name="van Nimwegen E."/>
            <person name="Verardo R."/>
            <person name="Wei C.L."/>
            <person name="Yagi K."/>
            <person name="Yamanishi H."/>
            <person name="Zabarovsky E."/>
            <person name="Zhu S."/>
            <person name="Zimmer A."/>
            <person name="Hide W."/>
            <person name="Bult C."/>
            <person name="Grimmond S.M."/>
            <person name="Teasdale R.D."/>
            <person name="Liu E.T."/>
            <person name="Brusic V."/>
            <person name="Quackenbush J."/>
            <person name="Wahlestedt C."/>
            <person name="Mattick J.S."/>
            <person name="Hume D.A."/>
            <person name="Kai C."/>
            <person name="Sasaki D."/>
            <person name="Tomaru Y."/>
            <person name="Fukuda S."/>
            <person name="Kanamori-Katayama M."/>
            <person name="Suzuki M."/>
            <person name="Aoki J."/>
            <person name="Arakawa T."/>
            <person name="Iida J."/>
            <person name="Imamura K."/>
            <person name="Itoh M."/>
            <person name="Kato T."/>
            <person name="Kawaji H."/>
            <person name="Kawagashira N."/>
            <person name="Kawashima T."/>
            <person name="Kojima M."/>
            <person name="Kondo S."/>
            <person name="Konno H."/>
            <person name="Nakano K."/>
            <person name="Ninomiya N."/>
            <person name="Nishio T."/>
            <person name="Okada M."/>
            <person name="Plessy C."/>
            <person name="Shibata K."/>
            <person name="Shiraki T."/>
            <person name="Suzuki S."/>
            <person name="Tagami M."/>
            <person name="Waki K."/>
            <person name="Watahiki A."/>
            <person name="Okamura-Oho Y."/>
            <person name="Suzuki H."/>
            <person name="Kawai J."/>
            <person name="Hayashizaki Y."/>
        </authorList>
    </citation>
    <scope>NUCLEOTIDE SEQUENCE [LARGE SCALE MRNA] (ISOFORM 2)</scope>
    <source>
        <strain>C57BL/6J</strain>
        <tissue>Bone marrow</tissue>
    </source>
</reference>
<reference key="2">
    <citation type="journal article" date="2004" name="Genome Res.">
        <title>The status, quality, and expansion of the NIH full-length cDNA project: the Mammalian Gene Collection (MGC).</title>
        <authorList>
            <consortium name="The MGC Project Team"/>
        </authorList>
    </citation>
    <scope>NUCLEOTIDE SEQUENCE [LARGE SCALE MRNA] (ISOFORM 1)</scope>
    <source>
        <strain>C57BL/6J</strain>
        <tissue>Fetal brain</tissue>
    </source>
</reference>
<reference key="3">
    <citation type="journal article" date="2004" name="Mol. Cell. Proteomics">
        <title>Phosphoproteomic analysis of the developing mouse brain.</title>
        <authorList>
            <person name="Ballif B.A."/>
            <person name="Villen J."/>
            <person name="Beausoleil S.A."/>
            <person name="Schwartz D."/>
            <person name="Gygi S.P."/>
        </authorList>
    </citation>
    <scope>PHOSPHORYLATION [LARGE SCALE ANALYSIS] AT SER-239</scope>
    <scope>IDENTIFICATION BY MASS SPECTROMETRY [LARGE SCALE ANALYSIS]</scope>
    <source>
        <tissue>Embryonic brain</tissue>
    </source>
</reference>
<reference key="4">
    <citation type="journal article" date="2006" name="Mol. Biol. Cell">
        <title>SMAP2, a novel ARF GTPase-activating protein, interacts with clathrin and clathrin assembly protein and functions on the AP-1-positive early endosome/trans-Golgi network.</title>
        <authorList>
            <person name="Natsume W."/>
            <person name="Tanabe K."/>
            <person name="Kon S."/>
            <person name="Yoshida N."/>
            <person name="Watanabe T."/>
            <person name="Torii T."/>
            <person name="Satake M."/>
        </authorList>
    </citation>
    <scope>FUNCTION</scope>
    <scope>INTERACTION WITH ARF1; PICALM AND CLATHRIN HEAVY CHAINS</scope>
    <scope>SUBCELLULAR LOCATION</scope>
    <scope>MUTAGENESIS OF ARG-56; 187-LEU--ASP-191 AND 212-ASP--LEU-214</scope>
</reference>
<reference key="5">
    <citation type="journal article" date="2007" name="Proc. Natl. Acad. Sci. U.S.A.">
        <title>Large-scale phosphorylation analysis of mouse liver.</title>
        <authorList>
            <person name="Villen J."/>
            <person name="Beausoleil S.A."/>
            <person name="Gerber S.A."/>
            <person name="Gygi S.P."/>
        </authorList>
    </citation>
    <scope>IDENTIFICATION BY MASS SPECTROMETRY [LARGE SCALE ANALYSIS]</scope>
    <source>
        <tissue>Liver</tissue>
    </source>
</reference>
<reference key="6">
    <citation type="journal article" date="2009" name="Immunity">
        <title>The phagosomal proteome in interferon-gamma-activated macrophages.</title>
        <authorList>
            <person name="Trost M."/>
            <person name="English L."/>
            <person name="Lemieux S."/>
            <person name="Courcelles M."/>
            <person name="Desjardins M."/>
            <person name="Thibault P."/>
        </authorList>
    </citation>
    <scope>IDENTIFICATION BY MASS SPECTROMETRY [LARGE SCALE ANALYSIS]</scope>
</reference>
<reference key="7">
    <citation type="journal article" date="2010" name="Cell">
        <title>A tissue-specific atlas of mouse protein phosphorylation and expression.</title>
        <authorList>
            <person name="Huttlin E.L."/>
            <person name="Jedrychowski M.P."/>
            <person name="Elias J.E."/>
            <person name="Goswami T."/>
            <person name="Rad R."/>
            <person name="Beausoleil S.A."/>
            <person name="Villen J."/>
            <person name="Haas W."/>
            <person name="Sowa M.E."/>
            <person name="Gygi S.P."/>
        </authorList>
    </citation>
    <scope>PHOSPHORYLATION [LARGE SCALE ANALYSIS] AT SER-219 AND SER-239</scope>
    <scope>IDENTIFICATION BY MASS SPECTROMETRY [LARGE SCALE ANALYSIS]</scope>
    <source>
        <tissue>Brain</tissue>
        <tissue>Kidney</tissue>
        <tissue>Liver</tissue>
        <tissue>Lung</tissue>
        <tissue>Pancreas</tissue>
        <tissue>Spleen</tissue>
        <tissue>Testis</tissue>
    </source>
</reference>
<comment type="function">
    <text evidence="4">GTPase activating protein that acts on ARF1. Can also activate ARF6 (in vitro). May play a role in clathrin-dependent retrograde transport from early endosomes to the trans-Golgi network.</text>
</comment>
<comment type="subunit">
    <text evidence="4">Interacts with ARF1. Interacts with PICALM and clathrin heavy chains.</text>
</comment>
<comment type="interaction">
    <interactant intactId="EBI-11358641">
        <id>Q7TN29</id>
    </interactant>
    <interactant intactId="EBI-8317690">
        <id>Q91VZ6</id>
        <label>Smap1</label>
    </interactant>
    <organismsDiffer>false</organismsDiffer>
    <experiments>4</experiments>
</comment>
<comment type="subcellular location">
    <subcellularLocation>
        <location evidence="4">Cytoplasm</location>
    </subcellularLocation>
    <text>Detected in multiple foci throughout the cytoplasm and in juxtanuclear structures.</text>
</comment>
<comment type="alternative products">
    <event type="alternative splicing"/>
    <isoform>
        <id>Q7TN29-1</id>
        <name>1</name>
        <sequence type="displayed"/>
    </isoform>
    <isoform>
        <id>Q7TN29-2</id>
        <name>2</name>
        <sequence type="described" ref="VSP_018505 VSP_018506"/>
    </isoform>
</comment>